<evidence type="ECO:0000250" key="1">
    <source>
        <dbReference type="UniProtKB" id="Q6PH81"/>
    </source>
</evidence>
<evidence type="ECO:0000255" key="2"/>
<evidence type="ECO:0000256" key="3">
    <source>
        <dbReference type="SAM" id="MobiDB-lite"/>
    </source>
</evidence>
<evidence type="ECO:0000305" key="4"/>
<organism>
    <name type="scientific">Bos taurus</name>
    <name type="common">Bovine</name>
    <dbReference type="NCBI Taxonomy" id="9913"/>
    <lineage>
        <taxon>Eukaryota</taxon>
        <taxon>Metazoa</taxon>
        <taxon>Chordata</taxon>
        <taxon>Craniata</taxon>
        <taxon>Vertebrata</taxon>
        <taxon>Euteleostomi</taxon>
        <taxon>Mammalia</taxon>
        <taxon>Eutheria</taxon>
        <taxon>Laurasiatheria</taxon>
        <taxon>Artiodactyla</taxon>
        <taxon>Ruminantia</taxon>
        <taxon>Pecora</taxon>
        <taxon>Bovidae</taxon>
        <taxon>Bovinae</taxon>
        <taxon>Bos</taxon>
    </lineage>
</organism>
<accession>Q32KT0</accession>
<comment type="similarity">
    <text evidence="4">Belongs to the UPF0547 family.</text>
</comment>
<keyword id="KW-0175">Coiled coil</keyword>
<keyword id="KW-0597">Phosphoprotein</keyword>
<keyword id="KW-1185">Reference proteome</keyword>
<reference key="1">
    <citation type="submission" date="2005-11" db="EMBL/GenBank/DDBJ databases">
        <authorList>
            <consortium name="NIH - Mammalian Gene Collection (MGC) project"/>
        </authorList>
    </citation>
    <scope>NUCLEOTIDE SEQUENCE [LARGE SCALE MRNA]</scope>
    <source>
        <strain>Crossbred X Angus</strain>
        <tissue>Liver</tissue>
    </source>
</reference>
<proteinExistence type="evidence at transcript level"/>
<name>CP087_BOVIN</name>
<dbReference type="EMBL" id="BC109943">
    <property type="protein sequence ID" value="AAI09944.1"/>
    <property type="molecule type" value="mRNA"/>
</dbReference>
<dbReference type="RefSeq" id="NP_001071513.1">
    <property type="nucleotide sequence ID" value="NM_001078045.1"/>
</dbReference>
<dbReference type="SMR" id="Q32KT0"/>
<dbReference type="FunCoup" id="Q32KT0">
    <property type="interactions" value="651"/>
</dbReference>
<dbReference type="STRING" id="9913.ENSBTAP00000004555"/>
<dbReference type="PaxDb" id="9913-ENSBTAP00000004555"/>
<dbReference type="GeneID" id="614339"/>
<dbReference type="KEGG" id="bta:614339"/>
<dbReference type="CTD" id="614339"/>
<dbReference type="VEuPathDB" id="HostDB:ENSBTAG00000003503"/>
<dbReference type="eggNOG" id="ENOG502RY8J">
    <property type="taxonomic scope" value="Eukaryota"/>
</dbReference>
<dbReference type="HOGENOM" id="CLU_141213_1_0_1"/>
<dbReference type="InParanoid" id="Q32KT0"/>
<dbReference type="OMA" id="QHVPVAC"/>
<dbReference type="OrthoDB" id="5981040at2759"/>
<dbReference type="TreeFam" id="TF331719"/>
<dbReference type="Proteomes" id="UP000009136">
    <property type="component" value="Chromosome 18"/>
</dbReference>
<dbReference type="Bgee" id="ENSBTAG00000003503">
    <property type="expression patterns" value="Expressed in spermatocyte and 107 other cell types or tissues"/>
</dbReference>
<dbReference type="InterPro" id="IPR040246">
    <property type="entry name" value="C16orf87-like"/>
</dbReference>
<dbReference type="InterPro" id="IPR018886">
    <property type="entry name" value="UPF0547"/>
</dbReference>
<dbReference type="PANTHER" id="PTHR31101">
    <property type="entry name" value="UPF0547 PROTEIN C16ORF87"/>
    <property type="match status" value="1"/>
</dbReference>
<dbReference type="Pfam" id="PF10571">
    <property type="entry name" value="UPF0547"/>
    <property type="match status" value="1"/>
</dbReference>
<sequence>MSATRAKKVKMATKSCPECDQQVPVACKSCPCGYIFISRKLLNAKHPEKAPSSTENKHEAKRRRTERVRREKINSTVNKDLENRKRSRSNSHSDHIRRGRGRPKSASAKKHEEEREKQEKEIDIYANLSDEKAFVFSVALAEINRKIINQRLIL</sequence>
<feature type="chain" id="PRO_0000326520" description="UPF0547 protein C16orf87 homolog">
    <location>
        <begin position="1"/>
        <end position="154"/>
    </location>
</feature>
<feature type="region of interest" description="Disordered" evidence="3">
    <location>
        <begin position="46"/>
        <end position="119"/>
    </location>
</feature>
<feature type="coiled-coil region" evidence="2">
    <location>
        <begin position="104"/>
        <end position="132"/>
    </location>
</feature>
<feature type="compositionally biased region" description="Basic and acidic residues" evidence="3">
    <location>
        <begin position="68"/>
        <end position="84"/>
    </location>
</feature>
<feature type="compositionally biased region" description="Basic and acidic residues" evidence="3">
    <location>
        <begin position="109"/>
        <end position="119"/>
    </location>
</feature>
<feature type="modified residue" description="Phosphoserine" evidence="1">
    <location>
        <position position="91"/>
    </location>
</feature>
<protein>
    <recommendedName>
        <fullName>UPF0547 protein C16orf87 homolog</fullName>
    </recommendedName>
</protein>